<comment type="function">
    <text evidence="1">Hydrolyzes ribosome-free peptidyl-tRNAs (with 1 or more amino acids incorporated), which drop off the ribosome during protein synthesis, or as a result of ribosome stalling.</text>
</comment>
<comment type="function">
    <text evidence="1">Catalyzes the release of premature peptidyl moieties from peptidyl-tRNA molecules trapped in stalled 50S ribosomal subunits, and thus maintains levels of free tRNAs and 50S ribosomes.</text>
</comment>
<comment type="catalytic activity">
    <reaction evidence="1">
        <text>an N-acyl-L-alpha-aminoacyl-tRNA + H2O = an N-acyl-L-amino acid + a tRNA + H(+)</text>
        <dbReference type="Rhea" id="RHEA:54448"/>
        <dbReference type="Rhea" id="RHEA-COMP:10123"/>
        <dbReference type="Rhea" id="RHEA-COMP:13883"/>
        <dbReference type="ChEBI" id="CHEBI:15377"/>
        <dbReference type="ChEBI" id="CHEBI:15378"/>
        <dbReference type="ChEBI" id="CHEBI:59874"/>
        <dbReference type="ChEBI" id="CHEBI:78442"/>
        <dbReference type="ChEBI" id="CHEBI:138191"/>
        <dbReference type="EC" id="3.1.1.29"/>
    </reaction>
</comment>
<comment type="subunit">
    <text evidence="1">Monomer.</text>
</comment>
<comment type="subcellular location">
    <subcellularLocation>
        <location evidence="1">Cytoplasm</location>
    </subcellularLocation>
</comment>
<comment type="similarity">
    <text evidence="1">Belongs to the PTH family.</text>
</comment>
<reference key="1">
    <citation type="journal article" date="2005" name="Infect. Immun.">
        <title>Whole-genome analyses of speciation events in pathogenic Brucellae.</title>
        <authorList>
            <person name="Chain P.S."/>
            <person name="Comerci D.J."/>
            <person name="Tolmasky M.E."/>
            <person name="Larimer F.W."/>
            <person name="Malfatti S.A."/>
            <person name="Vergez L.M."/>
            <person name="Aguero F."/>
            <person name="Land M.L."/>
            <person name="Ugalde R.A."/>
            <person name="Garcia E."/>
        </authorList>
    </citation>
    <scope>NUCLEOTIDE SEQUENCE [LARGE SCALE GENOMIC DNA]</scope>
    <source>
        <strain>2308</strain>
    </source>
</reference>
<keyword id="KW-0963">Cytoplasm</keyword>
<keyword id="KW-0378">Hydrolase</keyword>
<keyword id="KW-1185">Reference proteome</keyword>
<keyword id="KW-0694">RNA-binding</keyword>
<keyword id="KW-0820">tRNA-binding</keyword>
<sequence length="250" mass="27568">MLLIAGLGNPGPQYAHNRHNIGFMAADEIFRRHRFSNWQKKFQAEIADGVIDGEKVLLVKPQTFMNLSGQSIGEAMRFYKMTPADLVVIYDELDLVPGKLRIKTGGGSGGHNGIKSIDAHMQSFPGGQNYRRMRLGIGHPGAKELVHNYVLGDFAKADNEWLDTLMGAVADNVAMLARREDNSFMNRIALAMGDGNQRPGGVKTDPAQLEKAPPKAQSHIRQARQNQKKPNIPESGPMAEMLKKLLGKKD</sequence>
<evidence type="ECO:0000255" key="1">
    <source>
        <dbReference type="HAMAP-Rule" id="MF_00083"/>
    </source>
</evidence>
<evidence type="ECO:0000256" key="2">
    <source>
        <dbReference type="SAM" id="MobiDB-lite"/>
    </source>
</evidence>
<dbReference type="EC" id="3.1.1.29" evidence="1"/>
<dbReference type="EMBL" id="AM040264">
    <property type="protein sequence ID" value="CAJ11508.1"/>
    <property type="molecule type" value="Genomic_DNA"/>
</dbReference>
<dbReference type="RefSeq" id="WP_002964641.1">
    <property type="nucleotide sequence ID" value="NZ_KN046823.1"/>
</dbReference>
<dbReference type="SMR" id="Q2YLX5"/>
<dbReference type="STRING" id="359391.BAB1_1552"/>
<dbReference type="GeneID" id="93016185"/>
<dbReference type="KEGG" id="bmf:BAB1_1552"/>
<dbReference type="PATRIC" id="fig|359391.11.peg.1001"/>
<dbReference type="HOGENOM" id="CLU_062456_1_1_5"/>
<dbReference type="PhylomeDB" id="Q2YLX5"/>
<dbReference type="PRO" id="PR:Q2YLX5"/>
<dbReference type="Proteomes" id="UP000002719">
    <property type="component" value="Chromosome I"/>
</dbReference>
<dbReference type="GO" id="GO:0005737">
    <property type="term" value="C:cytoplasm"/>
    <property type="evidence" value="ECO:0007669"/>
    <property type="project" value="UniProtKB-SubCell"/>
</dbReference>
<dbReference type="GO" id="GO:0004045">
    <property type="term" value="F:peptidyl-tRNA hydrolase activity"/>
    <property type="evidence" value="ECO:0007669"/>
    <property type="project" value="UniProtKB-UniRule"/>
</dbReference>
<dbReference type="GO" id="GO:0000049">
    <property type="term" value="F:tRNA binding"/>
    <property type="evidence" value="ECO:0007669"/>
    <property type="project" value="UniProtKB-UniRule"/>
</dbReference>
<dbReference type="GO" id="GO:0006515">
    <property type="term" value="P:protein quality control for misfolded or incompletely synthesized proteins"/>
    <property type="evidence" value="ECO:0007669"/>
    <property type="project" value="UniProtKB-UniRule"/>
</dbReference>
<dbReference type="GO" id="GO:0072344">
    <property type="term" value="P:rescue of stalled ribosome"/>
    <property type="evidence" value="ECO:0007669"/>
    <property type="project" value="UniProtKB-UniRule"/>
</dbReference>
<dbReference type="CDD" id="cd00462">
    <property type="entry name" value="PTH"/>
    <property type="match status" value="1"/>
</dbReference>
<dbReference type="FunFam" id="3.40.50.1470:FF:000001">
    <property type="entry name" value="Peptidyl-tRNA hydrolase"/>
    <property type="match status" value="1"/>
</dbReference>
<dbReference type="Gene3D" id="3.40.50.1470">
    <property type="entry name" value="Peptidyl-tRNA hydrolase"/>
    <property type="match status" value="1"/>
</dbReference>
<dbReference type="HAMAP" id="MF_00083">
    <property type="entry name" value="Pept_tRNA_hydro_bact"/>
    <property type="match status" value="1"/>
</dbReference>
<dbReference type="InterPro" id="IPR001328">
    <property type="entry name" value="Pept_tRNA_hydro"/>
</dbReference>
<dbReference type="InterPro" id="IPR018171">
    <property type="entry name" value="Pept_tRNA_hydro_CS"/>
</dbReference>
<dbReference type="InterPro" id="IPR036416">
    <property type="entry name" value="Pept_tRNA_hydro_sf"/>
</dbReference>
<dbReference type="NCBIfam" id="TIGR00447">
    <property type="entry name" value="pth"/>
    <property type="match status" value="1"/>
</dbReference>
<dbReference type="PANTHER" id="PTHR17224">
    <property type="entry name" value="PEPTIDYL-TRNA HYDROLASE"/>
    <property type="match status" value="1"/>
</dbReference>
<dbReference type="PANTHER" id="PTHR17224:SF1">
    <property type="entry name" value="PEPTIDYL-TRNA HYDROLASE"/>
    <property type="match status" value="1"/>
</dbReference>
<dbReference type="Pfam" id="PF01195">
    <property type="entry name" value="Pept_tRNA_hydro"/>
    <property type="match status" value="1"/>
</dbReference>
<dbReference type="SUPFAM" id="SSF53178">
    <property type="entry name" value="Peptidyl-tRNA hydrolase-like"/>
    <property type="match status" value="1"/>
</dbReference>
<dbReference type="PROSITE" id="PS01195">
    <property type="entry name" value="PEPT_TRNA_HYDROL_1"/>
    <property type="match status" value="1"/>
</dbReference>
<dbReference type="PROSITE" id="PS01196">
    <property type="entry name" value="PEPT_TRNA_HYDROL_2"/>
    <property type="match status" value="1"/>
</dbReference>
<name>PTH_BRUA2</name>
<accession>Q2YLX5</accession>
<gene>
    <name evidence="1" type="primary">pth</name>
    <name type="ordered locus">BAB1_1552</name>
</gene>
<protein>
    <recommendedName>
        <fullName evidence="1">Peptidyl-tRNA hydrolase</fullName>
        <shortName evidence="1">Pth</shortName>
        <ecNumber evidence="1">3.1.1.29</ecNumber>
    </recommendedName>
</protein>
<organism>
    <name type="scientific">Brucella abortus (strain 2308)</name>
    <dbReference type="NCBI Taxonomy" id="359391"/>
    <lineage>
        <taxon>Bacteria</taxon>
        <taxon>Pseudomonadati</taxon>
        <taxon>Pseudomonadota</taxon>
        <taxon>Alphaproteobacteria</taxon>
        <taxon>Hyphomicrobiales</taxon>
        <taxon>Brucellaceae</taxon>
        <taxon>Brucella/Ochrobactrum group</taxon>
        <taxon>Brucella</taxon>
    </lineage>
</organism>
<feature type="chain" id="PRO_0000264010" description="Peptidyl-tRNA hydrolase">
    <location>
        <begin position="1"/>
        <end position="250"/>
    </location>
</feature>
<feature type="region of interest" description="Disordered" evidence="2">
    <location>
        <begin position="192"/>
        <end position="250"/>
    </location>
</feature>
<feature type="compositionally biased region" description="Polar residues" evidence="2">
    <location>
        <begin position="219"/>
        <end position="229"/>
    </location>
</feature>
<feature type="compositionally biased region" description="Basic and acidic residues" evidence="2">
    <location>
        <begin position="241"/>
        <end position="250"/>
    </location>
</feature>
<feature type="active site" description="Proton acceptor" evidence="1">
    <location>
        <position position="19"/>
    </location>
</feature>
<feature type="binding site" evidence="1">
    <location>
        <position position="14"/>
    </location>
    <ligand>
        <name>tRNA</name>
        <dbReference type="ChEBI" id="CHEBI:17843"/>
    </ligand>
</feature>
<feature type="binding site" evidence="1">
    <location>
        <position position="64"/>
    </location>
    <ligand>
        <name>tRNA</name>
        <dbReference type="ChEBI" id="CHEBI:17843"/>
    </ligand>
</feature>
<feature type="binding site" evidence="1">
    <location>
        <position position="66"/>
    </location>
    <ligand>
        <name>tRNA</name>
        <dbReference type="ChEBI" id="CHEBI:17843"/>
    </ligand>
</feature>
<feature type="binding site" evidence="1">
    <location>
        <position position="112"/>
    </location>
    <ligand>
        <name>tRNA</name>
        <dbReference type="ChEBI" id="CHEBI:17843"/>
    </ligand>
</feature>
<feature type="site" description="Discriminates between blocked and unblocked aminoacyl-tRNA" evidence="1">
    <location>
        <position position="9"/>
    </location>
</feature>
<feature type="site" description="Stabilizes the basic form of H active site to accept a proton" evidence="1">
    <location>
        <position position="91"/>
    </location>
</feature>
<proteinExistence type="inferred from homology"/>